<name>Y1096_GEOKA</name>
<proteinExistence type="inferred from homology"/>
<sequence length="89" mass="10605">MFPKRQGIIVWLHSLKYGKQLRKFGNIHYISKRLKYAVLYCDMEQVDHVMKKLASLPFVKRVEPSYRPFLKLEFESKGEKEKDSPYPLG</sequence>
<protein>
    <recommendedName>
        <fullName evidence="1">UPF0298 protein GK1096</fullName>
    </recommendedName>
</protein>
<accession>Q5L0Z9</accession>
<evidence type="ECO:0000255" key="1">
    <source>
        <dbReference type="HAMAP-Rule" id="MF_01126"/>
    </source>
</evidence>
<keyword id="KW-0963">Cytoplasm</keyword>
<keyword id="KW-1185">Reference proteome</keyword>
<reference key="1">
    <citation type="journal article" date="2004" name="Nucleic Acids Res.">
        <title>Thermoadaptation trait revealed by the genome sequence of thermophilic Geobacillus kaustophilus.</title>
        <authorList>
            <person name="Takami H."/>
            <person name="Takaki Y."/>
            <person name="Chee G.-J."/>
            <person name="Nishi S."/>
            <person name="Shimamura S."/>
            <person name="Suzuki H."/>
            <person name="Matsui S."/>
            <person name="Uchiyama I."/>
        </authorList>
    </citation>
    <scope>NUCLEOTIDE SEQUENCE [LARGE SCALE GENOMIC DNA]</scope>
    <source>
        <strain>HTA426</strain>
    </source>
</reference>
<comment type="subcellular location">
    <subcellularLocation>
        <location evidence="1">Cytoplasm</location>
    </subcellularLocation>
</comment>
<comment type="similarity">
    <text evidence="1">Belongs to the UPF0298 family.</text>
</comment>
<feature type="chain" id="PRO_0000074658" description="UPF0298 protein GK1096">
    <location>
        <begin position="1"/>
        <end position="89"/>
    </location>
</feature>
<dbReference type="EMBL" id="BA000043">
    <property type="protein sequence ID" value="BAD75381.1"/>
    <property type="molecule type" value="Genomic_DNA"/>
</dbReference>
<dbReference type="RefSeq" id="WP_011230596.1">
    <property type="nucleotide sequence ID" value="NC_006510.1"/>
</dbReference>
<dbReference type="SMR" id="Q5L0Z9"/>
<dbReference type="STRING" id="235909.GK1096"/>
<dbReference type="KEGG" id="gka:GK1096"/>
<dbReference type="eggNOG" id="COG4471">
    <property type="taxonomic scope" value="Bacteria"/>
</dbReference>
<dbReference type="HOGENOM" id="CLU_159890_2_0_9"/>
<dbReference type="Proteomes" id="UP000001172">
    <property type="component" value="Chromosome"/>
</dbReference>
<dbReference type="GO" id="GO:0005737">
    <property type="term" value="C:cytoplasm"/>
    <property type="evidence" value="ECO:0007669"/>
    <property type="project" value="UniProtKB-SubCell"/>
</dbReference>
<dbReference type="HAMAP" id="MF_01126">
    <property type="entry name" value="UPF0298"/>
    <property type="match status" value="1"/>
</dbReference>
<dbReference type="InterPro" id="IPR016979">
    <property type="entry name" value="DUF2129"/>
</dbReference>
<dbReference type="NCBIfam" id="NF002777">
    <property type="entry name" value="PRK02886.1"/>
    <property type="match status" value="1"/>
</dbReference>
<dbReference type="Pfam" id="PF09902">
    <property type="entry name" value="DUF2129"/>
    <property type="match status" value="1"/>
</dbReference>
<dbReference type="PIRSF" id="PIRSF031653">
    <property type="entry name" value="UCP031653"/>
    <property type="match status" value="1"/>
</dbReference>
<organism>
    <name type="scientific">Geobacillus kaustophilus (strain HTA426)</name>
    <dbReference type="NCBI Taxonomy" id="235909"/>
    <lineage>
        <taxon>Bacteria</taxon>
        <taxon>Bacillati</taxon>
        <taxon>Bacillota</taxon>
        <taxon>Bacilli</taxon>
        <taxon>Bacillales</taxon>
        <taxon>Anoxybacillaceae</taxon>
        <taxon>Geobacillus</taxon>
        <taxon>Geobacillus thermoleovorans group</taxon>
    </lineage>
</organism>
<gene>
    <name type="ordered locus">GK1096</name>
</gene>